<sequence length="209" mass="22989">MYDPVSTAMNLVPMVVEQTSRGERAFDIFSRLLKERIIFLTGPVEDGMASLICAQLLFLESENPKKEIAMYINSPGGVVTAGLAIYDTMQYIKSPVSTVCMGMAASMGSLLLAAGAAGQRISLPNARIMVHQPSGGFRGQASDIERHAEDIIKTKRRLNEIYVKHCGRTYEEVERTLDRDHFMSADEAKAWGLVDHVYDSRDAAEAGAE</sequence>
<evidence type="ECO:0000255" key="1">
    <source>
        <dbReference type="HAMAP-Rule" id="MF_00444"/>
    </source>
</evidence>
<name>CLPP_CAUVC</name>
<protein>
    <recommendedName>
        <fullName evidence="1">ATP-dependent Clp protease proteolytic subunit</fullName>
        <ecNumber evidence="1">3.4.21.92</ecNumber>
    </recommendedName>
    <alternativeName>
        <fullName evidence="1">Endopeptidase Clp</fullName>
    </alternativeName>
</protein>
<accession>P0CAU1</accession>
<accession>O87706</accession>
<feature type="chain" id="PRO_0000179527" description="ATP-dependent Clp protease proteolytic subunit">
    <location>
        <begin position="1"/>
        <end position="209"/>
    </location>
</feature>
<feature type="active site" description="Nucleophile" evidence="1">
    <location>
        <position position="106"/>
    </location>
</feature>
<feature type="active site" evidence="1">
    <location>
        <position position="131"/>
    </location>
</feature>
<gene>
    <name evidence="1" type="primary">clpP</name>
    <name type="ordered locus">CC_1963</name>
</gene>
<comment type="function">
    <text evidence="1">Cleaves peptides in various proteins in a process that requires ATP hydrolysis. Has a chymotrypsin-like activity. Plays a major role in the degradation of misfolded proteins.</text>
</comment>
<comment type="catalytic activity">
    <reaction evidence="1">
        <text>Hydrolysis of proteins to small peptides in the presence of ATP and magnesium. alpha-casein is the usual test substrate. In the absence of ATP, only oligopeptides shorter than five residues are hydrolyzed (such as succinyl-Leu-Tyr-|-NHMec, and Leu-Tyr-Leu-|-Tyr-Trp, in which cleavage of the -Tyr-|-Leu- and -Tyr-|-Trp bonds also occurs).</text>
        <dbReference type="EC" id="3.4.21.92"/>
    </reaction>
</comment>
<comment type="subunit">
    <text evidence="1">Fourteen ClpP subunits assemble into 2 heptameric rings which stack back to back to give a disk-like structure with a central cavity, resembling the structure of eukaryotic proteasomes.</text>
</comment>
<comment type="subcellular location">
    <subcellularLocation>
        <location evidence="1">Cytoplasm</location>
    </subcellularLocation>
</comment>
<comment type="similarity">
    <text evidence="1">Belongs to the peptidase S14 family.</text>
</comment>
<dbReference type="EC" id="3.4.21.92" evidence="1"/>
<dbReference type="EMBL" id="AE005673">
    <property type="protein sequence ID" value="AAK23938.1"/>
    <property type="molecule type" value="Genomic_DNA"/>
</dbReference>
<dbReference type="PIR" id="F87492">
    <property type="entry name" value="F87492"/>
</dbReference>
<dbReference type="RefSeq" id="NP_420770.1">
    <property type="nucleotide sequence ID" value="NC_002696.2"/>
</dbReference>
<dbReference type="SMR" id="P0CAU1"/>
<dbReference type="DIP" id="DIP-61221N"/>
<dbReference type="IntAct" id="P0CAU1">
    <property type="interactions" value="1"/>
</dbReference>
<dbReference type="STRING" id="190650.CC_1963"/>
<dbReference type="MEROPS" id="S14.001"/>
<dbReference type="EnsemblBacteria" id="AAK23938">
    <property type="protein sequence ID" value="AAK23938"/>
    <property type="gene ID" value="CC_1963"/>
</dbReference>
<dbReference type="KEGG" id="ccr:CC_1963"/>
<dbReference type="PATRIC" id="fig|190650.5.peg.1980"/>
<dbReference type="eggNOG" id="COG0740">
    <property type="taxonomic scope" value="Bacteria"/>
</dbReference>
<dbReference type="HOGENOM" id="CLU_058707_3_2_5"/>
<dbReference type="Proteomes" id="UP000001816">
    <property type="component" value="Chromosome"/>
</dbReference>
<dbReference type="GO" id="GO:0005737">
    <property type="term" value="C:cytoplasm"/>
    <property type="evidence" value="ECO:0007669"/>
    <property type="project" value="UniProtKB-SubCell"/>
</dbReference>
<dbReference type="GO" id="GO:0009368">
    <property type="term" value="C:endopeptidase Clp complex"/>
    <property type="evidence" value="ECO:0007669"/>
    <property type="project" value="TreeGrafter"/>
</dbReference>
<dbReference type="GO" id="GO:0004176">
    <property type="term" value="F:ATP-dependent peptidase activity"/>
    <property type="evidence" value="ECO:0007669"/>
    <property type="project" value="InterPro"/>
</dbReference>
<dbReference type="GO" id="GO:0051117">
    <property type="term" value="F:ATPase binding"/>
    <property type="evidence" value="ECO:0007669"/>
    <property type="project" value="TreeGrafter"/>
</dbReference>
<dbReference type="GO" id="GO:0004252">
    <property type="term" value="F:serine-type endopeptidase activity"/>
    <property type="evidence" value="ECO:0007669"/>
    <property type="project" value="UniProtKB-UniRule"/>
</dbReference>
<dbReference type="GO" id="GO:0006515">
    <property type="term" value="P:protein quality control for misfolded or incompletely synthesized proteins"/>
    <property type="evidence" value="ECO:0007669"/>
    <property type="project" value="TreeGrafter"/>
</dbReference>
<dbReference type="CDD" id="cd07017">
    <property type="entry name" value="S14_ClpP_2"/>
    <property type="match status" value="1"/>
</dbReference>
<dbReference type="FunFam" id="3.90.226.10:FF:000001">
    <property type="entry name" value="ATP-dependent Clp protease proteolytic subunit"/>
    <property type="match status" value="1"/>
</dbReference>
<dbReference type="Gene3D" id="3.90.226.10">
    <property type="entry name" value="2-enoyl-CoA Hydratase, Chain A, domain 1"/>
    <property type="match status" value="1"/>
</dbReference>
<dbReference type="HAMAP" id="MF_00444">
    <property type="entry name" value="ClpP"/>
    <property type="match status" value="1"/>
</dbReference>
<dbReference type="InterPro" id="IPR001907">
    <property type="entry name" value="ClpP"/>
</dbReference>
<dbReference type="InterPro" id="IPR029045">
    <property type="entry name" value="ClpP/crotonase-like_dom_sf"/>
</dbReference>
<dbReference type="InterPro" id="IPR023562">
    <property type="entry name" value="ClpP/TepA"/>
</dbReference>
<dbReference type="InterPro" id="IPR033135">
    <property type="entry name" value="ClpP_His_AS"/>
</dbReference>
<dbReference type="InterPro" id="IPR018215">
    <property type="entry name" value="ClpP_Ser_AS"/>
</dbReference>
<dbReference type="NCBIfam" id="NF001368">
    <property type="entry name" value="PRK00277.1"/>
    <property type="match status" value="1"/>
</dbReference>
<dbReference type="NCBIfam" id="NF009205">
    <property type="entry name" value="PRK12553.1"/>
    <property type="match status" value="1"/>
</dbReference>
<dbReference type="PANTHER" id="PTHR10381">
    <property type="entry name" value="ATP-DEPENDENT CLP PROTEASE PROTEOLYTIC SUBUNIT"/>
    <property type="match status" value="1"/>
</dbReference>
<dbReference type="PANTHER" id="PTHR10381:SF70">
    <property type="entry name" value="ATP-DEPENDENT CLP PROTEASE PROTEOLYTIC SUBUNIT"/>
    <property type="match status" value="1"/>
</dbReference>
<dbReference type="Pfam" id="PF00574">
    <property type="entry name" value="CLP_protease"/>
    <property type="match status" value="1"/>
</dbReference>
<dbReference type="PRINTS" id="PR00127">
    <property type="entry name" value="CLPPROTEASEP"/>
</dbReference>
<dbReference type="SUPFAM" id="SSF52096">
    <property type="entry name" value="ClpP/crotonase"/>
    <property type="match status" value="1"/>
</dbReference>
<dbReference type="PROSITE" id="PS00382">
    <property type="entry name" value="CLP_PROTEASE_HIS"/>
    <property type="match status" value="1"/>
</dbReference>
<dbReference type="PROSITE" id="PS00381">
    <property type="entry name" value="CLP_PROTEASE_SER"/>
    <property type="match status" value="1"/>
</dbReference>
<keyword id="KW-0963">Cytoplasm</keyword>
<keyword id="KW-0378">Hydrolase</keyword>
<keyword id="KW-0645">Protease</keyword>
<keyword id="KW-1185">Reference proteome</keyword>
<keyword id="KW-0720">Serine protease</keyword>
<reference key="1">
    <citation type="journal article" date="2001" name="Proc. Natl. Acad. Sci. U.S.A.">
        <title>Complete genome sequence of Caulobacter crescentus.</title>
        <authorList>
            <person name="Nierman W.C."/>
            <person name="Feldblyum T.V."/>
            <person name="Laub M.T."/>
            <person name="Paulsen I.T."/>
            <person name="Nelson K.E."/>
            <person name="Eisen J.A."/>
            <person name="Heidelberg J.F."/>
            <person name="Alley M.R.K."/>
            <person name="Ohta N."/>
            <person name="Maddock J.R."/>
            <person name="Potocka I."/>
            <person name="Nelson W.C."/>
            <person name="Newton A."/>
            <person name="Stephens C."/>
            <person name="Phadke N.D."/>
            <person name="Ely B."/>
            <person name="DeBoy R.T."/>
            <person name="Dodson R.J."/>
            <person name="Durkin A.S."/>
            <person name="Gwinn M.L."/>
            <person name="Haft D.H."/>
            <person name="Kolonay J.F."/>
            <person name="Smit J."/>
            <person name="Craven M.B."/>
            <person name="Khouri H.M."/>
            <person name="Shetty J."/>
            <person name="Berry K.J."/>
            <person name="Utterback T.R."/>
            <person name="Tran K."/>
            <person name="Wolf A.M."/>
            <person name="Vamathevan J.J."/>
            <person name="Ermolaeva M.D."/>
            <person name="White O."/>
            <person name="Salzberg S.L."/>
            <person name="Venter J.C."/>
            <person name="Shapiro L."/>
            <person name="Fraser C.M."/>
        </authorList>
    </citation>
    <scope>NUCLEOTIDE SEQUENCE [LARGE SCALE GENOMIC DNA]</scope>
    <source>
        <strain>ATCC 19089 / CIP 103742 / CB 15</strain>
    </source>
</reference>
<organism>
    <name type="scientific">Caulobacter vibrioides (strain ATCC 19089 / CIP 103742 / CB 15)</name>
    <name type="common">Caulobacter crescentus</name>
    <dbReference type="NCBI Taxonomy" id="190650"/>
    <lineage>
        <taxon>Bacteria</taxon>
        <taxon>Pseudomonadati</taxon>
        <taxon>Pseudomonadota</taxon>
        <taxon>Alphaproteobacteria</taxon>
        <taxon>Caulobacterales</taxon>
        <taxon>Caulobacteraceae</taxon>
        <taxon>Caulobacter</taxon>
    </lineage>
</organism>
<proteinExistence type="inferred from homology"/>